<protein>
    <recommendedName>
        <fullName>Ethylene-responsive transcription factor ERF036</fullName>
    </recommendedName>
</protein>
<comment type="function">
    <text evidence="1">Probably acts as a transcriptional activator. Binds to the GCC-box pathogenesis-related promoter element. May be involved in the regulation of gene expression by stress factors and by components of stress signal transduction pathways (By similarity).</text>
</comment>
<comment type="subcellular location">
    <subcellularLocation>
        <location evidence="5">Nucleus</location>
    </subcellularLocation>
</comment>
<comment type="induction">
    <text evidence="4">By UV LIGHT.</text>
</comment>
<comment type="similarity">
    <text evidence="5">Belongs to the AP2/ERF transcription factor family. ERF subfamily.</text>
</comment>
<comment type="sequence caution" evidence="5">
    <conflict type="erroneous initiation">
        <sequence resource="EMBL-CDS" id="BAB01268"/>
    </conflict>
    <text>Extended N-terminus.</text>
</comment>
<gene>
    <name type="primary">ERF036</name>
    <name type="ordered locus">At3g16280</name>
    <name type="ORF">MYA6.9</name>
    <name type="ORF">T02O04.22</name>
</gene>
<evidence type="ECO:0000250" key="1"/>
<evidence type="ECO:0000255" key="2">
    <source>
        <dbReference type="PROSITE-ProRule" id="PRU00366"/>
    </source>
</evidence>
<evidence type="ECO:0000256" key="3">
    <source>
        <dbReference type="SAM" id="MobiDB-lite"/>
    </source>
</evidence>
<evidence type="ECO:0000269" key="4">
    <source>
    </source>
</evidence>
<evidence type="ECO:0000305" key="5"/>
<organism>
    <name type="scientific">Arabidopsis thaliana</name>
    <name type="common">Mouse-ear cress</name>
    <dbReference type="NCBI Taxonomy" id="3702"/>
    <lineage>
        <taxon>Eukaryota</taxon>
        <taxon>Viridiplantae</taxon>
        <taxon>Streptophyta</taxon>
        <taxon>Embryophyta</taxon>
        <taxon>Tracheophyta</taxon>
        <taxon>Spermatophyta</taxon>
        <taxon>Magnoliopsida</taxon>
        <taxon>eudicotyledons</taxon>
        <taxon>Gunneridae</taxon>
        <taxon>Pentapetalae</taxon>
        <taxon>rosids</taxon>
        <taxon>malvids</taxon>
        <taxon>Brassicales</taxon>
        <taxon>Brassicaceae</taxon>
        <taxon>Camelineae</taxon>
        <taxon>Arabidopsis</taxon>
    </lineage>
</organism>
<feature type="chain" id="PRO_0000297924" description="Ethylene-responsive transcription factor ERF036">
    <location>
        <begin position="1"/>
        <end position="236"/>
    </location>
</feature>
<feature type="DNA-binding region" description="AP2/ERF" evidence="2">
    <location>
        <begin position="60"/>
        <end position="117"/>
    </location>
</feature>
<feature type="region of interest" description="Disordered" evidence="3">
    <location>
        <begin position="1"/>
        <end position="60"/>
    </location>
</feature>
<feature type="region of interest" description="Disordered" evidence="3">
    <location>
        <begin position="152"/>
        <end position="174"/>
    </location>
</feature>
<feature type="compositionally biased region" description="Low complexity" evidence="3">
    <location>
        <begin position="1"/>
        <end position="27"/>
    </location>
</feature>
<feature type="compositionally biased region" description="Low complexity" evidence="3">
    <location>
        <begin position="161"/>
        <end position="170"/>
    </location>
</feature>
<proteinExistence type="evidence at transcript level"/>
<keyword id="KW-0010">Activator</keyword>
<keyword id="KW-0238">DNA-binding</keyword>
<keyword id="KW-0936">Ethylene signaling pathway</keyword>
<keyword id="KW-0539">Nucleus</keyword>
<keyword id="KW-1185">Reference proteome</keyword>
<keyword id="KW-0804">Transcription</keyword>
<keyword id="KW-0805">Transcription regulation</keyword>
<name>ERF36_ARATH</name>
<dbReference type="EMBL" id="AY995152">
    <property type="protein sequence ID" value="AAX97731.1"/>
    <property type="molecule type" value="mRNA"/>
</dbReference>
<dbReference type="EMBL" id="AY560846">
    <property type="protein sequence ID" value="AAT44913.1"/>
    <property type="molecule type" value="mRNA"/>
</dbReference>
<dbReference type="EMBL" id="AB023046">
    <property type="protein sequence ID" value="BAB01268.1"/>
    <property type="status" value="ALT_INIT"/>
    <property type="molecule type" value="Genomic_DNA"/>
</dbReference>
<dbReference type="EMBL" id="AC001645">
    <property type="protein sequence ID" value="AAB63648.1"/>
    <property type="molecule type" value="Genomic_DNA"/>
</dbReference>
<dbReference type="EMBL" id="CP002686">
    <property type="protein sequence ID" value="AEE75793.1"/>
    <property type="molecule type" value="Genomic_DNA"/>
</dbReference>
<dbReference type="RefSeq" id="NP_001327746.1">
    <property type="nucleotide sequence ID" value="NM_001338227.1"/>
</dbReference>
<dbReference type="RefSeq" id="NP_188249.3">
    <property type="nucleotide sequence ID" value="NM_112499.5"/>
</dbReference>
<dbReference type="SMR" id="Q9LU18"/>
<dbReference type="BioGRID" id="6208">
    <property type="interactions" value="2"/>
</dbReference>
<dbReference type="FunCoup" id="Q9LU18">
    <property type="interactions" value="2"/>
</dbReference>
<dbReference type="IntAct" id="Q9LU18">
    <property type="interactions" value="1"/>
</dbReference>
<dbReference type="STRING" id="3702.Q9LU18"/>
<dbReference type="PaxDb" id="3702-AT3G16280.1"/>
<dbReference type="EnsemblPlants" id="AT3G16280.1">
    <property type="protein sequence ID" value="AT3G16280.1"/>
    <property type="gene ID" value="AT3G16280"/>
</dbReference>
<dbReference type="GeneID" id="820874"/>
<dbReference type="Gramene" id="AT3G16280.1">
    <property type="protein sequence ID" value="AT3G16280.1"/>
    <property type="gene ID" value="AT3G16280"/>
</dbReference>
<dbReference type="KEGG" id="ath:AT3G16280"/>
<dbReference type="Araport" id="AT3G16280"/>
<dbReference type="TAIR" id="AT3G16280">
    <property type="gene designation" value="ERF036"/>
</dbReference>
<dbReference type="eggNOG" id="ENOG502RNX7">
    <property type="taxonomic scope" value="Eukaryota"/>
</dbReference>
<dbReference type="HOGENOM" id="CLU_063331_3_0_1"/>
<dbReference type="InParanoid" id="Q9LU18"/>
<dbReference type="OMA" id="PAMDFYE"/>
<dbReference type="PRO" id="PR:Q9LU18"/>
<dbReference type="Proteomes" id="UP000006548">
    <property type="component" value="Chromosome 3"/>
</dbReference>
<dbReference type="ExpressionAtlas" id="Q9LU18">
    <property type="expression patterns" value="baseline and differential"/>
</dbReference>
<dbReference type="GO" id="GO:0005634">
    <property type="term" value="C:nucleus"/>
    <property type="evidence" value="ECO:0007669"/>
    <property type="project" value="UniProtKB-SubCell"/>
</dbReference>
<dbReference type="GO" id="GO:0003700">
    <property type="term" value="F:DNA-binding transcription factor activity"/>
    <property type="evidence" value="ECO:0000250"/>
    <property type="project" value="TAIR"/>
</dbReference>
<dbReference type="GO" id="GO:0000976">
    <property type="term" value="F:transcription cis-regulatory region binding"/>
    <property type="evidence" value="ECO:0000353"/>
    <property type="project" value="TAIR"/>
</dbReference>
<dbReference type="GO" id="GO:0009873">
    <property type="term" value="P:ethylene-activated signaling pathway"/>
    <property type="evidence" value="ECO:0007669"/>
    <property type="project" value="UniProtKB-KW"/>
</dbReference>
<dbReference type="CDD" id="cd00018">
    <property type="entry name" value="AP2"/>
    <property type="match status" value="1"/>
</dbReference>
<dbReference type="FunFam" id="3.30.730.10:FF:000001">
    <property type="entry name" value="Ethylene-responsive transcription factor 2"/>
    <property type="match status" value="1"/>
</dbReference>
<dbReference type="Gene3D" id="3.30.730.10">
    <property type="entry name" value="AP2/ERF domain"/>
    <property type="match status" value="1"/>
</dbReference>
<dbReference type="InterPro" id="IPR001471">
    <property type="entry name" value="AP2/ERF_dom"/>
</dbReference>
<dbReference type="InterPro" id="IPR036955">
    <property type="entry name" value="AP2/ERF_dom_sf"/>
</dbReference>
<dbReference type="InterPro" id="IPR051032">
    <property type="entry name" value="AP2/ERF_TF_ERF_subfamily"/>
</dbReference>
<dbReference type="InterPro" id="IPR016177">
    <property type="entry name" value="DNA-bd_dom_sf"/>
</dbReference>
<dbReference type="PANTHER" id="PTHR31985:SF313">
    <property type="entry name" value="ETHYLENE-RESPONSIVE TRANSCRIPTION FACTOR ERF036"/>
    <property type="match status" value="1"/>
</dbReference>
<dbReference type="PANTHER" id="PTHR31985">
    <property type="entry name" value="ETHYLENE-RESPONSIVE TRANSCRIPTION FACTOR ERF042-RELATED"/>
    <property type="match status" value="1"/>
</dbReference>
<dbReference type="Pfam" id="PF00847">
    <property type="entry name" value="AP2"/>
    <property type="match status" value="1"/>
</dbReference>
<dbReference type="PRINTS" id="PR00367">
    <property type="entry name" value="ETHRSPELEMNT"/>
</dbReference>
<dbReference type="SMART" id="SM00380">
    <property type="entry name" value="AP2"/>
    <property type="match status" value="1"/>
</dbReference>
<dbReference type="SUPFAM" id="SSF54171">
    <property type="entry name" value="DNA-binding domain"/>
    <property type="match status" value="1"/>
</dbReference>
<dbReference type="PROSITE" id="PS51032">
    <property type="entry name" value="AP2_ERF"/>
    <property type="match status" value="1"/>
</dbReference>
<reference key="1">
    <citation type="journal article" date="2005" name="Plant Mol. Biol.">
        <title>An annotation update via cDNA sequence analysis and comprehensive profiling of developmental, hormonal or environmental responsiveness of the Arabidopsis AP2/EREBP transcription factor gene family.</title>
        <authorList>
            <person name="Feng J.-X."/>
            <person name="Liu D."/>
            <person name="Pan Y."/>
            <person name="Gong W."/>
            <person name="Ma L.-G."/>
            <person name="Luo J.-C."/>
            <person name="Deng X.-W."/>
            <person name="Zhu Y.-X."/>
        </authorList>
    </citation>
    <scope>NUCLEOTIDE SEQUENCE [MRNA]</scope>
    <scope>INDUCTION BY UV</scope>
</reference>
<reference key="2">
    <citation type="submission" date="2004-02" db="EMBL/GenBank/DDBJ databases">
        <title>Molecular cloning, expression, phylogenetic and functional characterization of the Arabidopsis AP2/EREBP transcription factor family.</title>
        <authorList>
            <person name="Pan Y."/>
            <person name="Gong W."/>
            <person name="Liu D."/>
            <person name="Fu Q."/>
            <person name="Mei W.-Q."/>
            <person name="Song W.-Q."/>
            <person name="Ma L.-G."/>
            <person name="Luo J.-C."/>
            <person name="Deng X.-W."/>
            <person name="Zhu Y.-X."/>
        </authorList>
    </citation>
    <scope>NUCLEOTIDE SEQUENCE [MRNA]</scope>
</reference>
<reference key="3">
    <citation type="journal article" date="2000" name="DNA Res.">
        <title>Structural analysis of Arabidopsis thaliana chromosome 3. I. Sequence features of the regions of 4,504,864 bp covered by sixty P1 and TAC clones.</title>
        <authorList>
            <person name="Sato S."/>
            <person name="Nakamura Y."/>
            <person name="Kaneko T."/>
            <person name="Katoh T."/>
            <person name="Asamizu E."/>
            <person name="Tabata S."/>
        </authorList>
    </citation>
    <scope>NUCLEOTIDE SEQUENCE [LARGE SCALE GENOMIC DNA]</scope>
    <source>
        <strain>cv. Columbia</strain>
    </source>
</reference>
<reference key="4">
    <citation type="journal article" date="2000" name="Nature">
        <title>Sequence and analysis of chromosome 3 of the plant Arabidopsis thaliana.</title>
        <authorList>
            <person name="Salanoubat M."/>
            <person name="Lemcke K."/>
            <person name="Rieger M."/>
            <person name="Ansorge W."/>
            <person name="Unseld M."/>
            <person name="Fartmann B."/>
            <person name="Valle G."/>
            <person name="Bloecker H."/>
            <person name="Perez-Alonso M."/>
            <person name="Obermaier B."/>
            <person name="Delseny M."/>
            <person name="Boutry M."/>
            <person name="Grivell L.A."/>
            <person name="Mache R."/>
            <person name="Puigdomenech P."/>
            <person name="De Simone V."/>
            <person name="Choisne N."/>
            <person name="Artiguenave F."/>
            <person name="Robert C."/>
            <person name="Brottier P."/>
            <person name="Wincker P."/>
            <person name="Cattolico L."/>
            <person name="Weissenbach J."/>
            <person name="Saurin W."/>
            <person name="Quetier F."/>
            <person name="Schaefer M."/>
            <person name="Mueller-Auer S."/>
            <person name="Gabel C."/>
            <person name="Fuchs M."/>
            <person name="Benes V."/>
            <person name="Wurmbach E."/>
            <person name="Drzonek H."/>
            <person name="Erfle H."/>
            <person name="Jordan N."/>
            <person name="Bangert S."/>
            <person name="Wiedelmann R."/>
            <person name="Kranz H."/>
            <person name="Voss H."/>
            <person name="Holland R."/>
            <person name="Brandt P."/>
            <person name="Nyakatura G."/>
            <person name="Vezzi A."/>
            <person name="D'Angelo M."/>
            <person name="Pallavicini A."/>
            <person name="Toppo S."/>
            <person name="Simionati B."/>
            <person name="Conrad A."/>
            <person name="Hornischer K."/>
            <person name="Kauer G."/>
            <person name="Loehnert T.-H."/>
            <person name="Nordsiek G."/>
            <person name="Reichelt J."/>
            <person name="Scharfe M."/>
            <person name="Schoen O."/>
            <person name="Bargues M."/>
            <person name="Terol J."/>
            <person name="Climent J."/>
            <person name="Navarro P."/>
            <person name="Collado C."/>
            <person name="Perez-Perez A."/>
            <person name="Ottenwaelder B."/>
            <person name="Duchemin D."/>
            <person name="Cooke R."/>
            <person name="Laudie M."/>
            <person name="Berger-Llauro C."/>
            <person name="Purnelle B."/>
            <person name="Masuy D."/>
            <person name="de Haan M."/>
            <person name="Maarse A.C."/>
            <person name="Alcaraz J.-P."/>
            <person name="Cottet A."/>
            <person name="Casacuberta E."/>
            <person name="Monfort A."/>
            <person name="Argiriou A."/>
            <person name="Flores M."/>
            <person name="Liguori R."/>
            <person name="Vitale D."/>
            <person name="Mannhaupt G."/>
            <person name="Haase D."/>
            <person name="Schoof H."/>
            <person name="Rudd S."/>
            <person name="Zaccaria P."/>
            <person name="Mewes H.-W."/>
            <person name="Mayer K.F.X."/>
            <person name="Kaul S."/>
            <person name="Town C.D."/>
            <person name="Koo H.L."/>
            <person name="Tallon L.J."/>
            <person name="Jenkins J."/>
            <person name="Rooney T."/>
            <person name="Rizzo M."/>
            <person name="Walts A."/>
            <person name="Utterback T."/>
            <person name="Fujii C.Y."/>
            <person name="Shea T.P."/>
            <person name="Creasy T.H."/>
            <person name="Haas B."/>
            <person name="Maiti R."/>
            <person name="Wu D."/>
            <person name="Peterson J."/>
            <person name="Van Aken S."/>
            <person name="Pai G."/>
            <person name="Militscher J."/>
            <person name="Sellers P."/>
            <person name="Gill J.E."/>
            <person name="Feldblyum T.V."/>
            <person name="Preuss D."/>
            <person name="Lin X."/>
            <person name="Nierman W.C."/>
            <person name="Salzberg S.L."/>
            <person name="White O."/>
            <person name="Venter J.C."/>
            <person name="Fraser C.M."/>
            <person name="Kaneko T."/>
            <person name="Nakamura Y."/>
            <person name="Sato S."/>
            <person name="Kato T."/>
            <person name="Asamizu E."/>
            <person name="Sasamoto S."/>
            <person name="Kimura T."/>
            <person name="Idesawa K."/>
            <person name="Kawashima K."/>
            <person name="Kishida Y."/>
            <person name="Kiyokawa C."/>
            <person name="Kohara M."/>
            <person name="Matsumoto M."/>
            <person name="Matsuno A."/>
            <person name="Muraki A."/>
            <person name="Nakayama S."/>
            <person name="Nakazaki N."/>
            <person name="Shinpo S."/>
            <person name="Takeuchi C."/>
            <person name="Wada T."/>
            <person name="Watanabe A."/>
            <person name="Yamada M."/>
            <person name="Yasuda M."/>
            <person name="Tabata S."/>
        </authorList>
    </citation>
    <scope>NUCLEOTIDE SEQUENCE [LARGE SCALE GENOMIC DNA]</scope>
    <source>
        <strain>cv. Columbia</strain>
    </source>
</reference>
<reference key="5">
    <citation type="journal article" date="2017" name="Plant J.">
        <title>Araport11: a complete reannotation of the Arabidopsis thaliana reference genome.</title>
        <authorList>
            <person name="Cheng C.Y."/>
            <person name="Krishnakumar V."/>
            <person name="Chan A.P."/>
            <person name="Thibaud-Nissen F."/>
            <person name="Schobel S."/>
            <person name="Town C.D."/>
        </authorList>
    </citation>
    <scope>GENOME REANNOTATION</scope>
    <source>
        <strain>cv. Columbia</strain>
    </source>
</reference>
<reference key="6">
    <citation type="journal article" date="2006" name="Plant Physiol.">
        <title>Genome-wide analysis of the ERF gene family in Arabidopsis and rice.</title>
        <authorList>
            <person name="Nakano T."/>
            <person name="Suzuki K."/>
            <person name="Fujimura T."/>
            <person name="Shinshi H."/>
        </authorList>
    </citation>
    <scope>GENE FAMILY</scope>
    <scope>NOMENCLATURE</scope>
</reference>
<accession>Q9LU18</accession>
<accession>O04328</accession>
<sequence length="236" mass="26205">MTSLNSSASPTSSSSDQSDATTTTSTHLSEEEAPPRNNNTRKRRRDSSSASSSSSMQHPVYRGVRMRSWGKWVSEIRQPRKKTRIWLGTFVTADMAARAHDVAALTIKGSSAVLNFPELASLFPRPASSSPHDIQTAAAEAAAMVVEEKLLEKDEAPEAPPSSESSYVAAESEDEERLEKIVELPNIEEGSYDESVTSRADLAYSEPFDCWVYPPVMDFYEEISEFNFVELWSFNH</sequence>